<evidence type="ECO:0000256" key="1">
    <source>
        <dbReference type="SAM" id="MobiDB-lite"/>
    </source>
</evidence>
<evidence type="ECO:0000305" key="2"/>
<protein>
    <recommendedName>
        <fullName>Oxysterol-binding protein 3</fullName>
    </recommendedName>
    <alternativeName>
        <fullName>OSBPc</fullName>
    </alternativeName>
</protein>
<organism>
    <name type="scientific">Dictyostelium discoideum</name>
    <name type="common">Social amoeba</name>
    <dbReference type="NCBI Taxonomy" id="44689"/>
    <lineage>
        <taxon>Eukaryota</taxon>
        <taxon>Amoebozoa</taxon>
        <taxon>Evosea</taxon>
        <taxon>Eumycetozoa</taxon>
        <taxon>Dictyostelia</taxon>
        <taxon>Dictyosteliales</taxon>
        <taxon>Dictyosteliaceae</taxon>
        <taxon>Dictyostelium</taxon>
    </lineage>
</organism>
<accession>Q55CR2</accession>
<comment type="similarity">
    <text evidence="2">Belongs to the OSBP family.</text>
</comment>
<name>OSB3_DICDI</name>
<keyword id="KW-1185">Reference proteome</keyword>
<proteinExistence type="inferred from homology"/>
<sequence>MGKSDRKLTEENSIENGVKPGKLTEEEMDAIDNSSQSKIVAIASMAKRLGLGLGSDLSQVEYPSSFIAPFSTLNFFSNNFANHFNILLRANKIENEMDRLIEVFKYSTTIHKIPEDCMKVPLNAVIGETQSLNFQTPDLNSPNDLISDNYLITEQVSELPPNTATCIYNKKEGVKALFNHESKIVFQITNVKTPTTGRKYVRFDKFDEEYDIEFPVLHSRFMRGFVEYCGEGSIKSNKSKCFVSTNYIAKPLIGGNYHAYEAKVYNGIDSKPIYKISGQWDGESKITNLKTNETKPFFKNITTTTNFTPTILNTDSSVVWGKIIQSVAQGKPINLAREKSKIIENQKTLNWAPSQFFLNLEMGVWEPKLLND</sequence>
<gene>
    <name type="primary">osbC</name>
    <name type="ORF">DDB_G0269940</name>
</gene>
<dbReference type="EMBL" id="AAFI02000005">
    <property type="protein sequence ID" value="EAL72320.1"/>
    <property type="molecule type" value="Genomic_DNA"/>
</dbReference>
<dbReference type="RefSeq" id="XP_646419.1">
    <property type="nucleotide sequence ID" value="XM_641327.1"/>
</dbReference>
<dbReference type="SMR" id="Q55CR2"/>
<dbReference type="FunCoup" id="Q55CR2">
    <property type="interactions" value="2"/>
</dbReference>
<dbReference type="STRING" id="44689.Q55CR2"/>
<dbReference type="PaxDb" id="44689-DDB0230091"/>
<dbReference type="EnsemblProtists" id="EAL72320">
    <property type="protein sequence ID" value="EAL72320"/>
    <property type="gene ID" value="DDB_G0269940"/>
</dbReference>
<dbReference type="GeneID" id="8617376"/>
<dbReference type="KEGG" id="ddi:DDB_G0269940"/>
<dbReference type="dictyBase" id="DDB_G0269940">
    <property type="gene designation" value="osbC"/>
</dbReference>
<dbReference type="VEuPathDB" id="AmoebaDB:DDB_G0269940"/>
<dbReference type="eggNOG" id="KOG2210">
    <property type="taxonomic scope" value="Eukaryota"/>
</dbReference>
<dbReference type="HOGENOM" id="CLU_706815_0_0_1"/>
<dbReference type="InParanoid" id="Q55CR2"/>
<dbReference type="PhylomeDB" id="Q55CR2"/>
<dbReference type="Reactome" id="R-DDI-1482801">
    <property type="pathway name" value="Acyl chain remodelling of PS"/>
</dbReference>
<dbReference type="Reactome" id="R-DDI-9013407">
    <property type="pathway name" value="RHOH GTPase cycle"/>
</dbReference>
<dbReference type="PRO" id="PR:Q55CR2"/>
<dbReference type="Proteomes" id="UP000002195">
    <property type="component" value="Chromosome 1"/>
</dbReference>
<dbReference type="GO" id="GO:0005829">
    <property type="term" value="C:cytosol"/>
    <property type="evidence" value="ECO:0000318"/>
    <property type="project" value="GO_Central"/>
</dbReference>
<dbReference type="GO" id="GO:0016020">
    <property type="term" value="C:membrane"/>
    <property type="evidence" value="ECO:0000318"/>
    <property type="project" value="GO_Central"/>
</dbReference>
<dbReference type="GO" id="GO:0032934">
    <property type="term" value="F:sterol binding"/>
    <property type="evidence" value="ECO:0000318"/>
    <property type="project" value="GO_Central"/>
</dbReference>
<dbReference type="FunFam" id="2.40.160.120:FF:000011">
    <property type="entry name" value="Oxysterol-binding protein-related protein 4C"/>
    <property type="match status" value="1"/>
</dbReference>
<dbReference type="Gene3D" id="2.40.160.120">
    <property type="match status" value="1"/>
</dbReference>
<dbReference type="InterPro" id="IPR037239">
    <property type="entry name" value="OSBP_sf"/>
</dbReference>
<dbReference type="InterPro" id="IPR000648">
    <property type="entry name" value="Oxysterol-bd"/>
</dbReference>
<dbReference type="PANTHER" id="PTHR10972:SF78">
    <property type="entry name" value="OXYSTEROL-BINDING PROTEIN 1-RELATED"/>
    <property type="match status" value="1"/>
</dbReference>
<dbReference type="PANTHER" id="PTHR10972">
    <property type="entry name" value="OXYSTEROL-BINDING PROTEIN-RELATED"/>
    <property type="match status" value="1"/>
</dbReference>
<dbReference type="Pfam" id="PF01237">
    <property type="entry name" value="Oxysterol_BP"/>
    <property type="match status" value="1"/>
</dbReference>
<dbReference type="SUPFAM" id="SSF144000">
    <property type="entry name" value="Oxysterol-binding protein-like"/>
    <property type="match status" value="1"/>
</dbReference>
<feature type="chain" id="PRO_0000328467" description="Oxysterol-binding protein 3">
    <location>
        <begin position="1"/>
        <end position="372"/>
    </location>
</feature>
<feature type="region of interest" description="Disordered" evidence="1">
    <location>
        <begin position="1"/>
        <end position="25"/>
    </location>
</feature>
<feature type="compositionally biased region" description="Basic and acidic residues" evidence="1">
    <location>
        <begin position="1"/>
        <end position="10"/>
    </location>
</feature>
<reference key="1">
    <citation type="journal article" date="2005" name="Nature">
        <title>The genome of the social amoeba Dictyostelium discoideum.</title>
        <authorList>
            <person name="Eichinger L."/>
            <person name="Pachebat J.A."/>
            <person name="Gloeckner G."/>
            <person name="Rajandream M.A."/>
            <person name="Sucgang R."/>
            <person name="Berriman M."/>
            <person name="Song J."/>
            <person name="Olsen R."/>
            <person name="Szafranski K."/>
            <person name="Xu Q."/>
            <person name="Tunggal B."/>
            <person name="Kummerfeld S."/>
            <person name="Madera M."/>
            <person name="Konfortov B.A."/>
            <person name="Rivero F."/>
            <person name="Bankier A.T."/>
            <person name="Lehmann R."/>
            <person name="Hamlin N."/>
            <person name="Davies R."/>
            <person name="Gaudet P."/>
            <person name="Fey P."/>
            <person name="Pilcher K."/>
            <person name="Chen G."/>
            <person name="Saunders D."/>
            <person name="Sodergren E.J."/>
            <person name="Davis P."/>
            <person name="Kerhornou A."/>
            <person name="Nie X."/>
            <person name="Hall N."/>
            <person name="Anjard C."/>
            <person name="Hemphill L."/>
            <person name="Bason N."/>
            <person name="Farbrother P."/>
            <person name="Desany B."/>
            <person name="Just E."/>
            <person name="Morio T."/>
            <person name="Rost R."/>
            <person name="Churcher C.M."/>
            <person name="Cooper J."/>
            <person name="Haydock S."/>
            <person name="van Driessche N."/>
            <person name="Cronin A."/>
            <person name="Goodhead I."/>
            <person name="Muzny D.M."/>
            <person name="Mourier T."/>
            <person name="Pain A."/>
            <person name="Lu M."/>
            <person name="Harper D."/>
            <person name="Lindsay R."/>
            <person name="Hauser H."/>
            <person name="James K.D."/>
            <person name="Quiles M."/>
            <person name="Madan Babu M."/>
            <person name="Saito T."/>
            <person name="Buchrieser C."/>
            <person name="Wardroper A."/>
            <person name="Felder M."/>
            <person name="Thangavelu M."/>
            <person name="Johnson D."/>
            <person name="Knights A."/>
            <person name="Loulseged H."/>
            <person name="Mungall K.L."/>
            <person name="Oliver K."/>
            <person name="Price C."/>
            <person name="Quail M.A."/>
            <person name="Urushihara H."/>
            <person name="Hernandez J."/>
            <person name="Rabbinowitsch E."/>
            <person name="Steffen D."/>
            <person name="Sanders M."/>
            <person name="Ma J."/>
            <person name="Kohara Y."/>
            <person name="Sharp S."/>
            <person name="Simmonds M.N."/>
            <person name="Spiegler S."/>
            <person name="Tivey A."/>
            <person name="Sugano S."/>
            <person name="White B."/>
            <person name="Walker D."/>
            <person name="Woodward J.R."/>
            <person name="Winckler T."/>
            <person name="Tanaka Y."/>
            <person name="Shaulsky G."/>
            <person name="Schleicher M."/>
            <person name="Weinstock G.M."/>
            <person name="Rosenthal A."/>
            <person name="Cox E.C."/>
            <person name="Chisholm R.L."/>
            <person name="Gibbs R.A."/>
            <person name="Loomis W.F."/>
            <person name="Platzer M."/>
            <person name="Kay R.R."/>
            <person name="Williams J.G."/>
            <person name="Dear P.H."/>
            <person name="Noegel A.A."/>
            <person name="Barrell B.G."/>
            <person name="Kuspa A."/>
        </authorList>
    </citation>
    <scope>NUCLEOTIDE SEQUENCE [LARGE SCALE GENOMIC DNA]</scope>
    <source>
        <strain>AX4</strain>
    </source>
</reference>